<dbReference type="EC" id="6.1.1.1" evidence="1"/>
<dbReference type="EMBL" id="CP000082">
    <property type="protein sequence ID" value="AAZ19817.1"/>
    <property type="molecule type" value="Genomic_DNA"/>
</dbReference>
<dbReference type="RefSeq" id="WP_011281226.1">
    <property type="nucleotide sequence ID" value="NC_007204.1"/>
</dbReference>
<dbReference type="SMR" id="Q4FQ91"/>
<dbReference type="STRING" id="259536.Psyc_1970"/>
<dbReference type="KEGG" id="par:Psyc_1970"/>
<dbReference type="eggNOG" id="COG0162">
    <property type="taxonomic scope" value="Bacteria"/>
</dbReference>
<dbReference type="HOGENOM" id="CLU_024003_5_0_6"/>
<dbReference type="OrthoDB" id="9804243at2"/>
<dbReference type="Proteomes" id="UP000000546">
    <property type="component" value="Chromosome"/>
</dbReference>
<dbReference type="GO" id="GO:0005829">
    <property type="term" value="C:cytosol"/>
    <property type="evidence" value="ECO:0007669"/>
    <property type="project" value="TreeGrafter"/>
</dbReference>
<dbReference type="GO" id="GO:0005524">
    <property type="term" value="F:ATP binding"/>
    <property type="evidence" value="ECO:0007669"/>
    <property type="project" value="UniProtKB-UniRule"/>
</dbReference>
<dbReference type="GO" id="GO:0003723">
    <property type="term" value="F:RNA binding"/>
    <property type="evidence" value="ECO:0007669"/>
    <property type="project" value="UniProtKB-KW"/>
</dbReference>
<dbReference type="GO" id="GO:0004831">
    <property type="term" value="F:tyrosine-tRNA ligase activity"/>
    <property type="evidence" value="ECO:0007669"/>
    <property type="project" value="UniProtKB-UniRule"/>
</dbReference>
<dbReference type="GO" id="GO:0006437">
    <property type="term" value="P:tyrosyl-tRNA aminoacylation"/>
    <property type="evidence" value="ECO:0007669"/>
    <property type="project" value="UniProtKB-UniRule"/>
</dbReference>
<dbReference type="CDD" id="cd00165">
    <property type="entry name" value="S4"/>
    <property type="match status" value="1"/>
</dbReference>
<dbReference type="CDD" id="cd00805">
    <property type="entry name" value="TyrRS_core"/>
    <property type="match status" value="1"/>
</dbReference>
<dbReference type="FunFam" id="3.40.50.620:FF:000061">
    <property type="entry name" value="Tyrosine--tRNA ligase"/>
    <property type="match status" value="1"/>
</dbReference>
<dbReference type="Gene3D" id="3.40.50.620">
    <property type="entry name" value="HUPs"/>
    <property type="match status" value="1"/>
</dbReference>
<dbReference type="Gene3D" id="3.10.290.10">
    <property type="entry name" value="RNA-binding S4 domain"/>
    <property type="match status" value="1"/>
</dbReference>
<dbReference type="Gene3D" id="1.10.240.10">
    <property type="entry name" value="Tyrosyl-Transfer RNA Synthetase"/>
    <property type="match status" value="1"/>
</dbReference>
<dbReference type="HAMAP" id="MF_02007">
    <property type="entry name" value="Tyr_tRNA_synth_type2"/>
    <property type="match status" value="1"/>
</dbReference>
<dbReference type="InterPro" id="IPR001412">
    <property type="entry name" value="aa-tRNA-synth_I_CS"/>
</dbReference>
<dbReference type="InterPro" id="IPR002305">
    <property type="entry name" value="aa-tRNA-synth_Ic"/>
</dbReference>
<dbReference type="InterPro" id="IPR014729">
    <property type="entry name" value="Rossmann-like_a/b/a_fold"/>
</dbReference>
<dbReference type="InterPro" id="IPR002942">
    <property type="entry name" value="S4_RNA-bd"/>
</dbReference>
<dbReference type="InterPro" id="IPR036986">
    <property type="entry name" value="S4_RNA-bd_sf"/>
</dbReference>
<dbReference type="InterPro" id="IPR002307">
    <property type="entry name" value="Tyr-tRNA-ligase"/>
</dbReference>
<dbReference type="InterPro" id="IPR024088">
    <property type="entry name" value="Tyr-tRNA-ligase_bac-type"/>
</dbReference>
<dbReference type="InterPro" id="IPR024108">
    <property type="entry name" value="Tyr-tRNA-ligase_bac_2"/>
</dbReference>
<dbReference type="NCBIfam" id="TIGR00234">
    <property type="entry name" value="tyrS"/>
    <property type="match status" value="1"/>
</dbReference>
<dbReference type="PANTHER" id="PTHR11766:SF1">
    <property type="entry name" value="TYROSINE--TRNA LIGASE"/>
    <property type="match status" value="1"/>
</dbReference>
<dbReference type="PANTHER" id="PTHR11766">
    <property type="entry name" value="TYROSYL-TRNA SYNTHETASE"/>
    <property type="match status" value="1"/>
</dbReference>
<dbReference type="Pfam" id="PF01479">
    <property type="entry name" value="S4"/>
    <property type="match status" value="1"/>
</dbReference>
<dbReference type="Pfam" id="PF00579">
    <property type="entry name" value="tRNA-synt_1b"/>
    <property type="match status" value="1"/>
</dbReference>
<dbReference type="PRINTS" id="PR01040">
    <property type="entry name" value="TRNASYNTHTYR"/>
</dbReference>
<dbReference type="SUPFAM" id="SSF55174">
    <property type="entry name" value="Alpha-L RNA-binding motif"/>
    <property type="match status" value="1"/>
</dbReference>
<dbReference type="SUPFAM" id="SSF52374">
    <property type="entry name" value="Nucleotidylyl transferase"/>
    <property type="match status" value="1"/>
</dbReference>
<dbReference type="PROSITE" id="PS00178">
    <property type="entry name" value="AA_TRNA_LIGASE_I"/>
    <property type="match status" value="1"/>
</dbReference>
<dbReference type="PROSITE" id="PS50889">
    <property type="entry name" value="S4"/>
    <property type="match status" value="1"/>
</dbReference>
<name>SYY_PSYA2</name>
<sequence length="403" mass="44947">MTEKTYTLEEQLALIQRGAQEILSEEDLVKKLKLNRPLRIKAGFDPTAPDLHLGHTVLINKLKHFQDLGHEIYFLIGDYTAKIGDPSGKNSTRPPLTDEQIKANAETYAEQVFKILDKEKTRVVFNSEWFNDMSAADMIQLASHQTVSRMLERDDFSKRYASQTPIAIHEFLYPLVQGYDSIALKADVELGGTDQTFNLLMGRTLQGRYGQEQQVCITVPILEGLDGVNKMSKSLNNYVGIYDAPGTMYQKLLSMPDTLIRRYFEFLSFKPMEEVENLMAEMEDGRNPQEIKRILAEELIERFHDADAAANAHKSAGNVLADGELPVDLPEVTLELEGQDALFITQILNQAALAKNSSSAKDMIKRGAVKVDGEVVDAGFSLTAGQTVVIQAGKKAYAKVTVD</sequence>
<keyword id="KW-0030">Aminoacyl-tRNA synthetase</keyword>
<keyword id="KW-0067">ATP-binding</keyword>
<keyword id="KW-0963">Cytoplasm</keyword>
<keyword id="KW-0436">Ligase</keyword>
<keyword id="KW-0547">Nucleotide-binding</keyword>
<keyword id="KW-0648">Protein biosynthesis</keyword>
<keyword id="KW-1185">Reference proteome</keyword>
<keyword id="KW-0694">RNA-binding</keyword>
<protein>
    <recommendedName>
        <fullName evidence="1">Tyrosine--tRNA ligase</fullName>
        <ecNumber evidence="1">6.1.1.1</ecNumber>
    </recommendedName>
    <alternativeName>
        <fullName evidence="1">Tyrosyl-tRNA synthetase</fullName>
        <shortName evidence="1">TyrRS</shortName>
    </alternativeName>
</protein>
<comment type="function">
    <text evidence="1">Catalyzes the attachment of tyrosine to tRNA(Tyr) in a two-step reaction: tyrosine is first activated by ATP to form Tyr-AMP and then transferred to the acceptor end of tRNA(Tyr).</text>
</comment>
<comment type="catalytic activity">
    <reaction evidence="1">
        <text>tRNA(Tyr) + L-tyrosine + ATP = L-tyrosyl-tRNA(Tyr) + AMP + diphosphate + H(+)</text>
        <dbReference type="Rhea" id="RHEA:10220"/>
        <dbReference type="Rhea" id="RHEA-COMP:9706"/>
        <dbReference type="Rhea" id="RHEA-COMP:9707"/>
        <dbReference type="ChEBI" id="CHEBI:15378"/>
        <dbReference type="ChEBI" id="CHEBI:30616"/>
        <dbReference type="ChEBI" id="CHEBI:33019"/>
        <dbReference type="ChEBI" id="CHEBI:58315"/>
        <dbReference type="ChEBI" id="CHEBI:78442"/>
        <dbReference type="ChEBI" id="CHEBI:78536"/>
        <dbReference type="ChEBI" id="CHEBI:456215"/>
        <dbReference type="EC" id="6.1.1.1"/>
    </reaction>
</comment>
<comment type="subunit">
    <text evidence="1">Homodimer.</text>
</comment>
<comment type="subcellular location">
    <subcellularLocation>
        <location evidence="1">Cytoplasm</location>
    </subcellularLocation>
</comment>
<comment type="similarity">
    <text evidence="1">Belongs to the class-I aminoacyl-tRNA synthetase family. TyrS type 2 subfamily.</text>
</comment>
<evidence type="ECO:0000255" key="1">
    <source>
        <dbReference type="HAMAP-Rule" id="MF_02007"/>
    </source>
</evidence>
<accession>Q4FQ91</accession>
<gene>
    <name evidence="1" type="primary">tyrS</name>
    <name type="ordered locus">Psyc_1970</name>
</gene>
<organism>
    <name type="scientific">Psychrobacter arcticus (strain DSM 17307 / VKM B-2377 / 273-4)</name>
    <dbReference type="NCBI Taxonomy" id="259536"/>
    <lineage>
        <taxon>Bacteria</taxon>
        <taxon>Pseudomonadati</taxon>
        <taxon>Pseudomonadota</taxon>
        <taxon>Gammaproteobacteria</taxon>
        <taxon>Moraxellales</taxon>
        <taxon>Moraxellaceae</taxon>
        <taxon>Psychrobacter</taxon>
    </lineage>
</organism>
<proteinExistence type="inferred from homology"/>
<feature type="chain" id="PRO_0000236757" description="Tyrosine--tRNA ligase">
    <location>
        <begin position="1"/>
        <end position="403"/>
    </location>
</feature>
<feature type="domain" description="S4 RNA-binding" evidence="1">
    <location>
        <begin position="342"/>
        <end position="402"/>
    </location>
</feature>
<feature type="short sequence motif" description="'HIGH' region">
    <location>
        <begin position="46"/>
        <end position="55"/>
    </location>
</feature>
<feature type="short sequence motif" description="'KMSKS' region">
    <location>
        <begin position="230"/>
        <end position="234"/>
    </location>
</feature>
<feature type="binding site" evidence="1">
    <location>
        <position position="233"/>
    </location>
    <ligand>
        <name>ATP</name>
        <dbReference type="ChEBI" id="CHEBI:30616"/>
    </ligand>
</feature>
<reference key="1">
    <citation type="journal article" date="2010" name="Appl. Environ. Microbiol.">
        <title>The genome sequence of Psychrobacter arcticus 273-4, a psychroactive Siberian permafrost bacterium, reveals mechanisms for adaptation to low-temperature growth.</title>
        <authorList>
            <person name="Ayala-del-Rio H.L."/>
            <person name="Chain P.S."/>
            <person name="Grzymski J.J."/>
            <person name="Ponder M.A."/>
            <person name="Ivanova N."/>
            <person name="Bergholz P.W."/>
            <person name="Di Bartolo G."/>
            <person name="Hauser L."/>
            <person name="Land M."/>
            <person name="Bakermans C."/>
            <person name="Rodrigues D."/>
            <person name="Klappenbach J."/>
            <person name="Zarka D."/>
            <person name="Larimer F."/>
            <person name="Richardson P."/>
            <person name="Murray A."/>
            <person name="Thomashow M."/>
            <person name="Tiedje J.M."/>
        </authorList>
    </citation>
    <scope>NUCLEOTIDE SEQUENCE [LARGE SCALE GENOMIC DNA]</scope>
    <source>
        <strain>DSM 17307 / VKM B-2377 / 273-4</strain>
    </source>
</reference>